<proteinExistence type="evidence at transcript level"/>
<accession>Q9DD48</accession>
<sequence length="423" mass="46376">MSTKQVTCRYFLHGVCREGSRCLFSHDLNNSKPSTICKFYQRGVCAYGERCRYDHIKPSSRGGGGGAPEDQAGGGGAGGGGAGIGGAGGGPSVRGGMKKNLVLRDRVLGVDRVDRMFGAPADSMWSDVSTAAAPHSYVEAIRTGLDASAQDQATPPVCGPSQNLPQLCPYAANGHCFYEENCTYLHGDLCEVCGLQVLHPHDSEQRRAHEKMCLAAFEADMEKAFAAQLSQDKVCSICMEVVVQKANPSDRRFGILSSCCHTFCLACIRKWRCTRTFSNTIIKSCPECRVVSEFVIPSVYWVEDQEDKDHLIDLFKSGVSKKACKYFDQGRGSCPFGGKCLYLHAFPDGTRAEPDRPRKQLSSEGNVRFMNSVRLWDFIEEREQRSVPPLPALDDDMAELRELFMQMSGPSHDGPETPPTADQ</sequence>
<name>MKRN2_SERQU</name>
<feature type="chain" id="PRO_0000055958" description="E3 ubiquitin-protein ligase makorin-2">
    <location>
        <begin position="1"/>
        <end position="423"/>
    </location>
</feature>
<feature type="zinc finger region" description="C3H1-type 1" evidence="4">
    <location>
        <begin position="2"/>
        <end position="29"/>
    </location>
</feature>
<feature type="zinc finger region" description="C3H1-type 2" evidence="4">
    <location>
        <begin position="31"/>
        <end position="58"/>
    </location>
</feature>
<feature type="zinc finger region" description="C3H1-type 3" evidence="4">
    <location>
        <begin position="162"/>
        <end position="189"/>
    </location>
</feature>
<feature type="zinc finger region" description="RING-type" evidence="3">
    <location>
        <begin position="235"/>
        <end position="289"/>
    </location>
</feature>
<feature type="zinc finger region" description="C3H1-type 4" evidence="4">
    <location>
        <begin position="318"/>
        <end position="347"/>
    </location>
</feature>
<feature type="region of interest" description="Disordered" evidence="5">
    <location>
        <begin position="59"/>
        <end position="90"/>
    </location>
</feature>
<feature type="region of interest" description="Makorin-type Cys-His">
    <location>
        <begin position="190"/>
        <end position="219"/>
    </location>
</feature>
<feature type="compositionally biased region" description="Gly residues" evidence="5">
    <location>
        <begin position="61"/>
        <end position="90"/>
    </location>
</feature>
<keyword id="KW-0963">Cytoplasm</keyword>
<keyword id="KW-0217">Developmental protein</keyword>
<keyword id="KW-0221">Differentiation</keyword>
<keyword id="KW-0479">Metal-binding</keyword>
<keyword id="KW-0524">Neurogenesis</keyword>
<keyword id="KW-0539">Nucleus</keyword>
<keyword id="KW-0677">Repeat</keyword>
<keyword id="KW-0804">Transcription</keyword>
<keyword id="KW-0805">Transcription regulation</keyword>
<keyword id="KW-0808">Transferase</keyword>
<keyword id="KW-0833">Ubl conjugation pathway</keyword>
<keyword id="KW-0862">Zinc</keyword>
<keyword id="KW-0863">Zinc-finger</keyword>
<dbReference type="EC" id="2.3.2.27" evidence="2"/>
<dbReference type="EMBL" id="AB047517">
    <property type="protein sequence ID" value="BAB18861.1"/>
    <property type="molecule type" value="Genomic_DNA"/>
</dbReference>
<dbReference type="EMBL" id="AB049436">
    <property type="protein sequence ID" value="BAB18815.1"/>
    <property type="molecule type" value="mRNA"/>
</dbReference>
<dbReference type="EMBL" id="AB049437">
    <property type="protein sequence ID" value="BAB39861.1"/>
    <property type="molecule type" value="mRNA"/>
</dbReference>
<dbReference type="EMBL" id="AB049438">
    <property type="protein sequence ID" value="BAB39862.1"/>
    <property type="molecule type" value="mRNA"/>
</dbReference>
<dbReference type="EMBL" id="AB049439">
    <property type="protein sequence ID" value="BAB39863.1"/>
    <property type="molecule type" value="mRNA"/>
</dbReference>
<dbReference type="UniPathway" id="UPA00143"/>
<dbReference type="GO" id="GO:0005737">
    <property type="term" value="C:cytoplasm"/>
    <property type="evidence" value="ECO:0007669"/>
    <property type="project" value="UniProtKB-SubCell"/>
</dbReference>
<dbReference type="GO" id="GO:0005634">
    <property type="term" value="C:nucleus"/>
    <property type="evidence" value="ECO:0007669"/>
    <property type="project" value="UniProtKB-SubCell"/>
</dbReference>
<dbReference type="GO" id="GO:0061630">
    <property type="term" value="F:ubiquitin protein ligase activity"/>
    <property type="evidence" value="ECO:0007669"/>
    <property type="project" value="InterPro"/>
</dbReference>
<dbReference type="GO" id="GO:0008270">
    <property type="term" value="F:zinc ion binding"/>
    <property type="evidence" value="ECO:0007669"/>
    <property type="project" value="UniProtKB-KW"/>
</dbReference>
<dbReference type="GO" id="GO:0030154">
    <property type="term" value="P:cell differentiation"/>
    <property type="evidence" value="ECO:0007669"/>
    <property type="project" value="UniProtKB-KW"/>
</dbReference>
<dbReference type="GO" id="GO:0007399">
    <property type="term" value="P:nervous system development"/>
    <property type="evidence" value="ECO:0007669"/>
    <property type="project" value="UniProtKB-KW"/>
</dbReference>
<dbReference type="GO" id="GO:0000209">
    <property type="term" value="P:protein polyubiquitination"/>
    <property type="evidence" value="ECO:0007669"/>
    <property type="project" value="InterPro"/>
</dbReference>
<dbReference type="FunFam" id="3.30.40.10:FF:000117">
    <property type="entry name" value="Probable E3 ubiquitin-protein ligase makorin-1"/>
    <property type="match status" value="1"/>
</dbReference>
<dbReference type="Gene3D" id="2.30.30.1190">
    <property type="match status" value="1"/>
</dbReference>
<dbReference type="Gene3D" id="4.10.1000.10">
    <property type="entry name" value="Zinc finger, CCCH-type"/>
    <property type="match status" value="1"/>
</dbReference>
<dbReference type="Gene3D" id="3.30.40.10">
    <property type="entry name" value="Zinc/RING finger domain, C3HC4 (zinc finger)"/>
    <property type="match status" value="1"/>
</dbReference>
<dbReference type="InterPro" id="IPR045072">
    <property type="entry name" value="MKRN-like"/>
</dbReference>
<dbReference type="InterPro" id="IPR000571">
    <property type="entry name" value="Znf_CCCH"/>
</dbReference>
<dbReference type="InterPro" id="IPR036855">
    <property type="entry name" value="Znf_CCCH_sf"/>
</dbReference>
<dbReference type="InterPro" id="IPR001841">
    <property type="entry name" value="Znf_RING"/>
</dbReference>
<dbReference type="InterPro" id="IPR013083">
    <property type="entry name" value="Znf_RING/FYVE/PHD"/>
</dbReference>
<dbReference type="InterPro" id="IPR017907">
    <property type="entry name" value="Znf_RING_CS"/>
</dbReference>
<dbReference type="PANTHER" id="PTHR11224:SF17">
    <property type="entry name" value="E3 UBIQUITIN-PROTEIN LIGASE MAKORIN-2"/>
    <property type="match status" value="1"/>
</dbReference>
<dbReference type="PANTHER" id="PTHR11224">
    <property type="entry name" value="MAKORIN-RELATED"/>
    <property type="match status" value="1"/>
</dbReference>
<dbReference type="Pfam" id="PF00642">
    <property type="entry name" value="zf-CCCH"/>
    <property type="match status" value="1"/>
</dbReference>
<dbReference type="Pfam" id="PF14608">
    <property type="entry name" value="zf-CCCH_2"/>
    <property type="match status" value="3"/>
</dbReference>
<dbReference type="SMART" id="SM00184">
    <property type="entry name" value="RING"/>
    <property type="match status" value="1"/>
</dbReference>
<dbReference type="SMART" id="SM00356">
    <property type="entry name" value="ZnF_C3H1"/>
    <property type="match status" value="4"/>
</dbReference>
<dbReference type="SUPFAM" id="SSF90229">
    <property type="entry name" value="CCCH zinc finger"/>
    <property type="match status" value="2"/>
</dbReference>
<dbReference type="SUPFAM" id="SSF57850">
    <property type="entry name" value="RING/U-box"/>
    <property type="match status" value="1"/>
</dbReference>
<dbReference type="PROSITE" id="PS50103">
    <property type="entry name" value="ZF_C3H1"/>
    <property type="match status" value="4"/>
</dbReference>
<dbReference type="PROSITE" id="PS00518">
    <property type="entry name" value="ZF_RING_1"/>
    <property type="match status" value="1"/>
</dbReference>
<dbReference type="PROSITE" id="PS50089">
    <property type="entry name" value="ZF_RING_2"/>
    <property type="match status" value="1"/>
</dbReference>
<evidence type="ECO:0000250" key="1">
    <source>
        <dbReference type="UniProtKB" id="B0F0H3"/>
    </source>
</evidence>
<evidence type="ECO:0000250" key="2">
    <source>
        <dbReference type="UniProtKB" id="Q9ERV1"/>
    </source>
</evidence>
<evidence type="ECO:0000255" key="3">
    <source>
        <dbReference type="PROSITE-ProRule" id="PRU00175"/>
    </source>
</evidence>
<evidence type="ECO:0000255" key="4">
    <source>
        <dbReference type="PROSITE-ProRule" id="PRU00723"/>
    </source>
</evidence>
<evidence type="ECO:0000256" key="5">
    <source>
        <dbReference type="SAM" id="MobiDB-lite"/>
    </source>
</evidence>
<evidence type="ECO:0000305" key="6"/>
<comment type="function">
    <text evidence="1 2">E3 ubiquitin ligase catalyzing the covalent attachment of ubiquitin moieties onto substrate proteins (By similarity). Inhibits neurogenesis and axis formation during embryonic development by modulating the phosphatidylinositol 3-kinase (PI3K) pathway. Acts downstream of PI3K and akt1 to up-regulate gsk3b mRNA expression.</text>
</comment>
<comment type="catalytic activity">
    <reaction evidence="2">
        <text>S-ubiquitinyl-[E2 ubiquitin-conjugating enzyme]-L-cysteine + [acceptor protein]-L-lysine = [E2 ubiquitin-conjugating enzyme]-L-cysteine + N(6)-ubiquitinyl-[acceptor protein]-L-lysine.</text>
        <dbReference type="EC" id="2.3.2.27"/>
    </reaction>
</comment>
<comment type="pathway">
    <text>Protein modification; protein ubiquitination.</text>
</comment>
<comment type="subcellular location">
    <subcellularLocation>
        <location evidence="2">Cytoplasm</location>
    </subcellularLocation>
    <subcellularLocation>
        <location evidence="2">Nucleus</location>
    </subcellularLocation>
</comment>
<gene>
    <name type="primary">mkrn2</name>
    <name type="synonym">yghl2</name>
    <name type="synonym">yghlc3hc4</name>
</gene>
<reference key="1">
    <citation type="journal article" date="2001" name="Genomics">
        <title>Phylogenetic conservation of the makorin-2 gene, encoding a multiple zinc-finger protein, antisense to the raf1 proto-oncogene.</title>
        <authorList>
            <person name="Gray T.A."/>
            <person name="Azama K."/>
            <person name="Whitmore K."/>
            <person name="Min A."/>
            <person name="Abe S."/>
            <person name="Nicholls R.D."/>
        </authorList>
    </citation>
    <scope>NUCLEOTIDE SEQUENCE [GENOMIC DNA / MRNA]</scope>
    <source>
        <tissue>Gill</tissue>
        <tissue>Testis</tissue>
    </source>
</reference>
<organism>
    <name type="scientific">Seriola quinqueradiata</name>
    <name type="common">Five-ray yellowtail</name>
    <dbReference type="NCBI Taxonomy" id="8161"/>
    <lineage>
        <taxon>Eukaryota</taxon>
        <taxon>Metazoa</taxon>
        <taxon>Chordata</taxon>
        <taxon>Craniata</taxon>
        <taxon>Vertebrata</taxon>
        <taxon>Euteleostomi</taxon>
        <taxon>Actinopterygii</taxon>
        <taxon>Neopterygii</taxon>
        <taxon>Teleostei</taxon>
        <taxon>Neoteleostei</taxon>
        <taxon>Acanthomorphata</taxon>
        <taxon>Carangaria</taxon>
        <taxon>Carangiformes</taxon>
        <taxon>Carangidae</taxon>
        <taxon>Seriola</taxon>
    </lineage>
</organism>
<protein>
    <recommendedName>
        <fullName>E3 ubiquitin-protein ligase makorin-2</fullName>
        <ecNumber evidence="2">2.3.2.27</ecNumber>
    </recommendedName>
    <alternativeName>
        <fullName evidence="6">RING-type E3 ubiquitin transferase makorin-2</fullName>
    </alternativeName>
    <alternativeName>
        <fullName>Zinc finger protein YGHLC3HC4</fullName>
    </alternativeName>
</protein>